<proteinExistence type="inferred from homology"/>
<protein>
    <recommendedName>
        <fullName evidence="1">UPF0502 protein YceH</fullName>
    </recommendedName>
</protein>
<sequence>MKYELTATEARVIGCLLEKQVTTPEQYPLSVHGVVTACNQKTNREPVMNLTEQAVQEQLDNLVKRHFLRTVSGFGNRVTKYEQRFCNSEFGDLKLSAAEVALVTTLLLRGAQTPGELRSRASRMYEFSDMAEVESTLERLASREDGPYVIRLAREPGKRESRYMHLFCGDVDELSLQTSVPDSASGDLQSRVEALESEVAELKQRLDSLLAHLGE</sequence>
<feature type="chain" id="PRO_0000382566" description="UPF0502 protein YceH">
    <location>
        <begin position="1"/>
        <end position="215"/>
    </location>
</feature>
<dbReference type="EMBL" id="CP000880">
    <property type="protein sequence ID" value="ABX21714.1"/>
    <property type="status" value="ALT_INIT"/>
    <property type="molecule type" value="Genomic_DNA"/>
</dbReference>
<dbReference type="SMR" id="A9MGZ5"/>
<dbReference type="STRING" id="41514.SARI_01829"/>
<dbReference type="KEGG" id="ses:SARI_01829"/>
<dbReference type="HOGENOM" id="CLU_057831_2_0_6"/>
<dbReference type="Proteomes" id="UP000002084">
    <property type="component" value="Chromosome"/>
</dbReference>
<dbReference type="Gene3D" id="1.10.10.10">
    <property type="entry name" value="Winged helix-like DNA-binding domain superfamily/Winged helix DNA-binding domain"/>
    <property type="match status" value="2"/>
</dbReference>
<dbReference type="HAMAP" id="MF_01584">
    <property type="entry name" value="UPF0502"/>
    <property type="match status" value="1"/>
</dbReference>
<dbReference type="InterPro" id="IPR007432">
    <property type="entry name" value="DUF480"/>
</dbReference>
<dbReference type="InterPro" id="IPR036388">
    <property type="entry name" value="WH-like_DNA-bd_sf"/>
</dbReference>
<dbReference type="InterPro" id="IPR036390">
    <property type="entry name" value="WH_DNA-bd_sf"/>
</dbReference>
<dbReference type="NCBIfam" id="NF008413">
    <property type="entry name" value="PRK11239.1"/>
    <property type="match status" value="1"/>
</dbReference>
<dbReference type="PANTHER" id="PTHR38768">
    <property type="entry name" value="UPF0502 PROTEIN YCEH"/>
    <property type="match status" value="1"/>
</dbReference>
<dbReference type="PANTHER" id="PTHR38768:SF1">
    <property type="entry name" value="UPF0502 PROTEIN YCEH"/>
    <property type="match status" value="1"/>
</dbReference>
<dbReference type="Pfam" id="PF04337">
    <property type="entry name" value="DUF480"/>
    <property type="match status" value="1"/>
</dbReference>
<dbReference type="SUPFAM" id="SSF46785">
    <property type="entry name" value="Winged helix' DNA-binding domain"/>
    <property type="match status" value="2"/>
</dbReference>
<keyword id="KW-1185">Reference proteome</keyword>
<reference key="1">
    <citation type="submission" date="2007-11" db="EMBL/GenBank/DDBJ databases">
        <authorList>
            <consortium name="The Salmonella enterica serovar Arizonae Genome Sequencing Project"/>
            <person name="McClelland M."/>
            <person name="Sanderson E.K."/>
            <person name="Porwollik S."/>
            <person name="Spieth J."/>
            <person name="Clifton W.S."/>
            <person name="Fulton R."/>
            <person name="Chunyan W."/>
            <person name="Wollam A."/>
            <person name="Shah N."/>
            <person name="Pepin K."/>
            <person name="Bhonagiri V."/>
            <person name="Nash W."/>
            <person name="Johnson M."/>
            <person name="Thiruvilangam P."/>
            <person name="Wilson R."/>
        </authorList>
    </citation>
    <scope>NUCLEOTIDE SEQUENCE [LARGE SCALE GENOMIC DNA]</scope>
    <source>
        <strain>ATCC BAA-731 / CDC346-86 / RSK2980</strain>
    </source>
</reference>
<accession>A9MGZ5</accession>
<organism>
    <name type="scientific">Salmonella arizonae (strain ATCC BAA-731 / CDC346-86 / RSK2980)</name>
    <dbReference type="NCBI Taxonomy" id="41514"/>
    <lineage>
        <taxon>Bacteria</taxon>
        <taxon>Pseudomonadati</taxon>
        <taxon>Pseudomonadota</taxon>
        <taxon>Gammaproteobacteria</taxon>
        <taxon>Enterobacterales</taxon>
        <taxon>Enterobacteriaceae</taxon>
        <taxon>Salmonella</taxon>
    </lineage>
</organism>
<comment type="similarity">
    <text evidence="1">Belongs to the UPF0502 family.</text>
</comment>
<comment type="sequence caution" evidence="2">
    <conflict type="erroneous initiation">
        <sequence resource="EMBL-CDS" id="ABX21714"/>
    </conflict>
</comment>
<name>YCEH_SALAR</name>
<evidence type="ECO:0000255" key="1">
    <source>
        <dbReference type="HAMAP-Rule" id="MF_01584"/>
    </source>
</evidence>
<evidence type="ECO:0000305" key="2"/>
<gene>
    <name evidence="1" type="primary">yceH</name>
    <name type="ordered locus">SARI_01829</name>
</gene>